<gene>
    <name type="primary">SIGB</name>
    <name type="synonym">ABC1</name>
    <name type="synonym">SIG1</name>
    <name type="synonym">SIG2</name>
    <name type="synonym">SIGA</name>
    <name type="ordered locus">At1g08540</name>
    <name type="ORF">F22O13.2</name>
    <name type="ORF">T27G7.22</name>
</gene>
<feature type="transit peptide" description="Chloroplast" evidence="2">
    <location>
        <begin position="1"/>
        <end position="39"/>
    </location>
</feature>
<feature type="chain" id="PRO_0000418094" description="RNA polymerase sigma factor sigB">
    <location>
        <begin position="40"/>
        <end position="572"/>
    </location>
</feature>
<feature type="DNA-binding region" description="H-T-H motif" evidence="1">
    <location>
        <begin position="530"/>
        <end position="549"/>
    </location>
</feature>
<feature type="region of interest" description="Disordered" evidence="3">
    <location>
        <begin position="215"/>
        <end position="249"/>
    </location>
</feature>
<feature type="short sequence motif" description="Polymerase core binding">
    <location>
        <begin position="360"/>
        <end position="373"/>
    </location>
</feature>
<feature type="sequence conflict" description="In Ref. 7; BAC43527." evidence="17" ref="7">
    <original>N</original>
    <variation>Y</variation>
    <location>
        <position position="136"/>
    </location>
</feature>
<feature type="sequence conflict" description="In Ref. 7; BAC43527." evidence="17" ref="7">
    <original>S</original>
    <variation>G</variation>
    <location>
        <position position="209"/>
    </location>
</feature>
<feature type="sequence conflict" description="In Ref. 3; AAB69385." evidence="17" ref="3">
    <original>S</original>
    <variation>SKL</variation>
    <location>
        <position position="270"/>
    </location>
</feature>
<feature type="sequence conflict" description="In Ref. 3; AAB69385." evidence="17" ref="3">
    <original>Q</original>
    <variation>R</variation>
    <location>
        <position position="466"/>
    </location>
</feature>
<feature type="sequence conflict" description="In Ref. 7; BAC43527." evidence="17" ref="7">
    <original>S</original>
    <variation>P</variation>
    <location>
        <position position="488"/>
    </location>
</feature>
<name>SIGB_ARATH</name>
<proteinExistence type="evidence at transcript level"/>
<sequence length="572" mass="64054">MSSCLLPQFKCPPDSFSIHFRTSFCAPKHNKGSVFFQPQCAVSTSPALLTSMLDVAKLRLPSFDTDSDSLISDRQWTYTRPDGPSTEAKYLEALASETLLTSDEAVVVAAAAEAVALARAAVKVAKDATLFKNSNNTNLLTSSTADKRSKWDQFTEKERAGILGHLAVSDNGIVSDKITASASNKESIGDLESEKQEEVELLEEQPSVSLAVRSTRQTERKARRAKGLEKTASGIPSVKTGSSPKKKRLVAQEVDHNDPLRYLRMTTSSSKLLTVREEHELSAGIQDLLKLERLQTELTERSGRQPTFAQWASAAGVDQKSLRQRIHHGTLCKDKMIKSNIRLVISIAKNYQGAGMNLQDLVQEGCRGLVRGAEKFDATKGFKFSTYAHWWIKQAVRKSLSDQSRMIRLPFHMVEATYRVKEARKQLYSETGKHPKNEEIAEATGLSMKRLMAVLLSPKPPRSLDQKIGMNQNLKPSEVIADPEAVTSEDILIKEFMRQDLDKVLDSLGTREKQVIRWRFGMEDGRMKTLQEIGEMMGVSRERVRQIESSAFRKLKNKKRNNHLQQYLVAQS</sequence>
<accession>O22056</accession>
<accession>O22455</accession>
<accession>Q8GWC1</accession>
<comment type="function">
    <text evidence="5 7 8 10 11 12">Required for the transition of plastids into chloroplasts by coordinating nuclear and chloroplastic genomes under light conditions. Sigma factors are initiation factors that promote the attachment of plastid-encoded RNA polymerase (PEP) to specific initiation sites and are then released. Promotes the biosynthesis of plastid-encoded tRNAs (e.g. trnE-UUC and trnV-UAC).</text>
</comment>
<comment type="subcellular location">
    <subcellularLocation>
        <location evidence="4 10">Plastid</location>
        <location evidence="4 10">Chloroplast</location>
    </subcellularLocation>
</comment>
<comment type="tissue specificity">
    <text evidence="4 6 10 12 13 16">Highly expressed in cotyledons, to a lesser extent in leaves, sepals and siliques, and barely expressed in roots. Present in seedlings.</text>
</comment>
<comment type="induction">
    <text evidence="4 6 9 10 14 15 16">Induced by red light, especially after dark adaptation. Moderately induced by blue light. Induced after two days of imbibition.</text>
</comment>
<comment type="disruption phenotype">
    <text evidence="7 8 11">Pale green seedlings exhibiting a strong reduction in plastid-encoded tRNA levels. Aberrant chloroplast development; normal etioplast in darkness, but abnormal chloroplast in light characterized by small size, poor thylakoid membranes and stacked lamellae.</text>
</comment>
<comment type="similarity">
    <text evidence="17">Belongs to the sigma-70 factor family.</text>
</comment>
<dbReference type="EMBL" id="AB004293">
    <property type="protein sequence ID" value="BAA22427.1"/>
    <property type="molecule type" value="mRNA"/>
</dbReference>
<dbReference type="EMBL" id="AB019943">
    <property type="protein sequence ID" value="BAA82449.1"/>
    <property type="molecule type" value="Genomic_DNA"/>
</dbReference>
<dbReference type="EMBL" id="AB004820">
    <property type="protein sequence ID" value="BAA24825.1"/>
    <property type="molecule type" value="mRNA"/>
</dbReference>
<dbReference type="EMBL" id="AF015543">
    <property type="protein sequence ID" value="AAB69385.1"/>
    <property type="molecule type" value="mRNA"/>
</dbReference>
<dbReference type="EMBL" id="Y15362">
    <property type="protein sequence ID" value="CAA75584.1"/>
    <property type="molecule type" value="mRNA"/>
</dbReference>
<dbReference type="EMBL" id="AC003981">
    <property type="protein sequence ID" value="AAF99752.1"/>
    <property type="molecule type" value="Genomic_DNA"/>
</dbReference>
<dbReference type="EMBL" id="AC006932">
    <property type="protein sequence ID" value="AAF22897.1"/>
    <property type="molecule type" value="Genomic_DNA"/>
</dbReference>
<dbReference type="EMBL" id="CP002684">
    <property type="protein sequence ID" value="AEE28303.1"/>
    <property type="molecule type" value="Genomic_DNA"/>
</dbReference>
<dbReference type="EMBL" id="AK118947">
    <property type="protein sequence ID" value="BAC43527.1"/>
    <property type="molecule type" value="mRNA"/>
</dbReference>
<dbReference type="EMBL" id="BT030346">
    <property type="protein sequence ID" value="ABO38759.1"/>
    <property type="molecule type" value="mRNA"/>
</dbReference>
<dbReference type="PIR" id="T00707">
    <property type="entry name" value="T00707"/>
</dbReference>
<dbReference type="RefSeq" id="NP_172330.1">
    <property type="nucleotide sequence ID" value="NM_100727.4"/>
</dbReference>
<dbReference type="SMR" id="O22056"/>
<dbReference type="BioGRID" id="22617">
    <property type="interactions" value="1"/>
</dbReference>
<dbReference type="FunCoup" id="O22056">
    <property type="interactions" value="910"/>
</dbReference>
<dbReference type="IntAct" id="O22056">
    <property type="interactions" value="1"/>
</dbReference>
<dbReference type="STRING" id="3702.O22056"/>
<dbReference type="iPTMnet" id="O22056"/>
<dbReference type="PaxDb" id="3702-AT1G08540.1"/>
<dbReference type="ProteomicsDB" id="234545"/>
<dbReference type="EnsemblPlants" id="AT1G08540.1">
    <property type="protein sequence ID" value="AT1G08540.1"/>
    <property type="gene ID" value="AT1G08540"/>
</dbReference>
<dbReference type="GeneID" id="837376"/>
<dbReference type="Gramene" id="AT1G08540.1">
    <property type="protein sequence ID" value="AT1G08540.1"/>
    <property type="gene ID" value="AT1G08540"/>
</dbReference>
<dbReference type="KEGG" id="ath:AT1G08540"/>
<dbReference type="Araport" id="AT1G08540"/>
<dbReference type="TAIR" id="AT1G08540">
    <property type="gene designation" value="SIG2"/>
</dbReference>
<dbReference type="eggNOG" id="ENOG502QVXR">
    <property type="taxonomic scope" value="Eukaryota"/>
</dbReference>
<dbReference type="HOGENOM" id="CLU_014793_0_0_1"/>
<dbReference type="InParanoid" id="O22056"/>
<dbReference type="OMA" id="ADKRSKW"/>
<dbReference type="PhylomeDB" id="O22056"/>
<dbReference type="PRO" id="PR:O22056"/>
<dbReference type="Proteomes" id="UP000006548">
    <property type="component" value="Chromosome 1"/>
</dbReference>
<dbReference type="ExpressionAtlas" id="O22056">
    <property type="expression patterns" value="baseline and differential"/>
</dbReference>
<dbReference type="GO" id="GO:0009507">
    <property type="term" value="C:chloroplast"/>
    <property type="evidence" value="ECO:0000314"/>
    <property type="project" value="UniProtKB"/>
</dbReference>
<dbReference type="GO" id="GO:0003677">
    <property type="term" value="F:DNA binding"/>
    <property type="evidence" value="ECO:0007669"/>
    <property type="project" value="UniProtKB-KW"/>
</dbReference>
<dbReference type="GO" id="GO:0016987">
    <property type="term" value="F:sigma factor activity"/>
    <property type="evidence" value="ECO:0000315"/>
    <property type="project" value="UniProtKB"/>
</dbReference>
<dbReference type="GO" id="GO:0071482">
    <property type="term" value="P:cellular response to light stimulus"/>
    <property type="evidence" value="ECO:0000315"/>
    <property type="project" value="UniProtKB"/>
</dbReference>
<dbReference type="GO" id="GO:0009658">
    <property type="term" value="P:chloroplast organization"/>
    <property type="evidence" value="ECO:0000315"/>
    <property type="project" value="UniProtKB"/>
</dbReference>
<dbReference type="GO" id="GO:0006352">
    <property type="term" value="P:DNA-templated transcription initiation"/>
    <property type="evidence" value="ECO:0000314"/>
    <property type="project" value="UniProtKB"/>
</dbReference>
<dbReference type="GO" id="GO:2001141">
    <property type="term" value="P:regulation of RNA biosynthetic process"/>
    <property type="evidence" value="ECO:0000315"/>
    <property type="project" value="UniProtKB"/>
</dbReference>
<dbReference type="GO" id="GO:0010114">
    <property type="term" value="P:response to red light"/>
    <property type="evidence" value="ECO:0000270"/>
    <property type="project" value="TAIR"/>
</dbReference>
<dbReference type="GO" id="GO:0006399">
    <property type="term" value="P:tRNA metabolic process"/>
    <property type="evidence" value="ECO:0000315"/>
    <property type="project" value="UniProtKB"/>
</dbReference>
<dbReference type="CDD" id="cd06171">
    <property type="entry name" value="Sigma70_r4"/>
    <property type="match status" value="1"/>
</dbReference>
<dbReference type="FunFam" id="1.10.601.10:FF:000007">
    <property type="entry name" value="RNA polymerase sigma factor sigB"/>
    <property type="match status" value="1"/>
</dbReference>
<dbReference type="Gene3D" id="1.10.601.10">
    <property type="entry name" value="RNA Polymerase Primary Sigma Factor"/>
    <property type="match status" value="1"/>
</dbReference>
<dbReference type="Gene3D" id="1.10.10.10">
    <property type="entry name" value="Winged helix-like DNA-binding domain superfamily/Winged helix DNA-binding domain"/>
    <property type="match status" value="2"/>
</dbReference>
<dbReference type="InterPro" id="IPR014284">
    <property type="entry name" value="RNA_pol_sigma-70_dom"/>
</dbReference>
<dbReference type="InterPro" id="IPR000943">
    <property type="entry name" value="RNA_pol_sigma70"/>
</dbReference>
<dbReference type="InterPro" id="IPR007627">
    <property type="entry name" value="RNA_pol_sigma70_r2"/>
</dbReference>
<dbReference type="InterPro" id="IPR007624">
    <property type="entry name" value="RNA_pol_sigma70_r3"/>
</dbReference>
<dbReference type="InterPro" id="IPR007630">
    <property type="entry name" value="RNA_pol_sigma70_r4"/>
</dbReference>
<dbReference type="InterPro" id="IPR013325">
    <property type="entry name" value="RNA_pol_sigma_r2"/>
</dbReference>
<dbReference type="InterPro" id="IPR013324">
    <property type="entry name" value="RNA_pol_sigma_r3/r4-like"/>
</dbReference>
<dbReference type="InterPro" id="IPR016262">
    <property type="entry name" value="RNA_pol_sigma_SigB/C/D/F"/>
</dbReference>
<dbReference type="InterPro" id="IPR050239">
    <property type="entry name" value="Sigma-70_RNA_pol_init_factors"/>
</dbReference>
<dbReference type="InterPro" id="IPR036388">
    <property type="entry name" value="WH-like_DNA-bd_sf"/>
</dbReference>
<dbReference type="NCBIfam" id="TIGR02937">
    <property type="entry name" value="sigma70-ECF"/>
    <property type="match status" value="1"/>
</dbReference>
<dbReference type="PANTHER" id="PTHR30603">
    <property type="entry name" value="RNA POLYMERASE SIGMA FACTOR RPO"/>
    <property type="match status" value="1"/>
</dbReference>
<dbReference type="PANTHER" id="PTHR30603:SF57">
    <property type="entry name" value="RNA POLYMERASE SIGMA FACTOR SIGB"/>
    <property type="match status" value="1"/>
</dbReference>
<dbReference type="Pfam" id="PF04542">
    <property type="entry name" value="Sigma70_r2"/>
    <property type="match status" value="1"/>
</dbReference>
<dbReference type="Pfam" id="PF04539">
    <property type="entry name" value="Sigma70_r3"/>
    <property type="match status" value="1"/>
</dbReference>
<dbReference type="Pfam" id="PF04545">
    <property type="entry name" value="Sigma70_r4"/>
    <property type="match status" value="1"/>
</dbReference>
<dbReference type="PIRSF" id="PIRSF000767">
    <property type="entry name" value="RNA_pol_sigma_SigB/C/D"/>
    <property type="match status" value="1"/>
</dbReference>
<dbReference type="PRINTS" id="PR00046">
    <property type="entry name" value="SIGMA70FCT"/>
</dbReference>
<dbReference type="SUPFAM" id="SSF88946">
    <property type="entry name" value="Sigma2 domain of RNA polymerase sigma factors"/>
    <property type="match status" value="1"/>
</dbReference>
<dbReference type="SUPFAM" id="SSF88659">
    <property type="entry name" value="Sigma3 and sigma4 domains of RNA polymerase sigma factors"/>
    <property type="match status" value="2"/>
</dbReference>
<dbReference type="PROSITE" id="PS00716">
    <property type="entry name" value="SIGMA70_2"/>
    <property type="match status" value="1"/>
</dbReference>
<organism>
    <name type="scientific">Arabidopsis thaliana</name>
    <name type="common">Mouse-ear cress</name>
    <dbReference type="NCBI Taxonomy" id="3702"/>
    <lineage>
        <taxon>Eukaryota</taxon>
        <taxon>Viridiplantae</taxon>
        <taxon>Streptophyta</taxon>
        <taxon>Embryophyta</taxon>
        <taxon>Tracheophyta</taxon>
        <taxon>Spermatophyta</taxon>
        <taxon>Magnoliopsida</taxon>
        <taxon>eudicotyledons</taxon>
        <taxon>Gunneridae</taxon>
        <taxon>Pentapetalae</taxon>
        <taxon>rosids</taxon>
        <taxon>malvids</taxon>
        <taxon>Brassicales</taxon>
        <taxon>Brassicaceae</taxon>
        <taxon>Camelineae</taxon>
        <taxon>Arabidopsis</taxon>
    </lineage>
</organism>
<reference key="1">
    <citation type="journal article" date="1997" name="FEBS Lett.">
        <title>Characterization of three cDNA species encoding plastid RNA polymerase sigma factors in Arabidopsis thaliana: evidence for the sigma factor heterogeneity in higher plant plastids.</title>
        <authorList>
            <person name="Tanaka K."/>
            <person name="Tozawa Y."/>
            <person name="Mochizuki N."/>
            <person name="Shinozaki K."/>
            <person name="Nagatani A."/>
            <person name="Wakasa K."/>
            <person name="Takahashi H."/>
        </authorList>
    </citation>
    <scope>NUCLEOTIDE SEQUENCE [GENOMIC DNA / MRNA]</scope>
    <scope>INDUCTION BY LIGHT</scope>
    <scope>GENE FAMILY</scope>
    <source>
        <strain>cv. Columbia</strain>
    </source>
</reference>
<reference key="2">
    <citation type="journal article" date="1997" name="Proc. Natl. Acad. Sci. U.S.A.">
        <title>Leaf-specifically expressed genes for polypeptides destined for chloroplasts with domains of sigma70 factors of bacterial RNA polymerases in Arabidopsis thaliana.</title>
        <authorList>
            <person name="Isono K."/>
            <person name="Shimizu M."/>
            <person name="Yoshimoto K."/>
            <person name="Niwa Y."/>
            <person name="Satoh K."/>
            <person name="Yokota A."/>
            <person name="Kobayashi H."/>
        </authorList>
    </citation>
    <scope>NUCLEOTIDE SEQUENCE [MRNA]</scope>
    <scope>TISSUE SPECIFICITY</scope>
    <scope>INDUCTION BY LIGHT</scope>
    <scope>GENE FAMILY</scope>
    <source>
        <strain>cv. Columbia</strain>
        <tissue>Leaf</tissue>
    </source>
</reference>
<reference key="3">
    <citation type="journal article" date="2000" name="Biochimie">
        <title>The role of sigma factors in plastid transcription.</title>
        <authorList>
            <person name="Allison L.A."/>
        </authorList>
    </citation>
    <scope>NUCLEOTIDE SEQUENCE [MRNA]</scope>
    <scope>TISSUE SPECIFICITY</scope>
    <scope>INDUCTION BY LIGHT</scope>
    <scope>GENE FAMILY</scope>
    <scope>NOMENCLATURE</scope>
    <source>
        <strain>cv. Columbia</strain>
        <tissue>Seedling hypocotyl</tissue>
    </source>
</reference>
<reference key="4">
    <citation type="journal article" date="2000" name="J. Biol. Chem.">
        <title>Evolutionary conservation of C-terminal domains of primary sigma(70)-type transcription factors between plants and bacteria.</title>
        <authorList>
            <person name="Hakimi M.-A."/>
            <person name="Privat I."/>
            <person name="Valay J.-G."/>
            <person name="Lerbs-Mache S."/>
        </authorList>
    </citation>
    <scope>NUCLEOTIDE SEQUENCE [MRNA]</scope>
    <scope>FUNCTION</scope>
</reference>
<reference key="5">
    <citation type="journal article" date="2000" name="Nature">
        <title>Sequence and analysis of chromosome 1 of the plant Arabidopsis thaliana.</title>
        <authorList>
            <person name="Theologis A."/>
            <person name="Ecker J.R."/>
            <person name="Palm C.J."/>
            <person name="Federspiel N.A."/>
            <person name="Kaul S."/>
            <person name="White O."/>
            <person name="Alonso J."/>
            <person name="Altafi H."/>
            <person name="Araujo R."/>
            <person name="Bowman C.L."/>
            <person name="Brooks S.Y."/>
            <person name="Buehler E."/>
            <person name="Chan A."/>
            <person name="Chao Q."/>
            <person name="Chen H."/>
            <person name="Cheuk R.F."/>
            <person name="Chin C.W."/>
            <person name="Chung M.K."/>
            <person name="Conn L."/>
            <person name="Conway A.B."/>
            <person name="Conway A.R."/>
            <person name="Creasy T.H."/>
            <person name="Dewar K."/>
            <person name="Dunn P."/>
            <person name="Etgu P."/>
            <person name="Feldblyum T.V."/>
            <person name="Feng J.-D."/>
            <person name="Fong B."/>
            <person name="Fujii C.Y."/>
            <person name="Gill J.E."/>
            <person name="Goldsmith A.D."/>
            <person name="Haas B."/>
            <person name="Hansen N.F."/>
            <person name="Hughes B."/>
            <person name="Huizar L."/>
            <person name="Hunter J.L."/>
            <person name="Jenkins J."/>
            <person name="Johnson-Hopson C."/>
            <person name="Khan S."/>
            <person name="Khaykin E."/>
            <person name="Kim C.J."/>
            <person name="Koo H.L."/>
            <person name="Kremenetskaia I."/>
            <person name="Kurtz D.B."/>
            <person name="Kwan A."/>
            <person name="Lam B."/>
            <person name="Langin-Hooper S."/>
            <person name="Lee A."/>
            <person name="Lee J.M."/>
            <person name="Lenz C.A."/>
            <person name="Li J.H."/>
            <person name="Li Y.-P."/>
            <person name="Lin X."/>
            <person name="Liu S.X."/>
            <person name="Liu Z.A."/>
            <person name="Luros J.S."/>
            <person name="Maiti R."/>
            <person name="Marziali A."/>
            <person name="Militscher J."/>
            <person name="Miranda M."/>
            <person name="Nguyen M."/>
            <person name="Nierman W.C."/>
            <person name="Osborne B.I."/>
            <person name="Pai G."/>
            <person name="Peterson J."/>
            <person name="Pham P.K."/>
            <person name="Rizzo M."/>
            <person name="Rooney T."/>
            <person name="Rowley D."/>
            <person name="Sakano H."/>
            <person name="Salzberg S.L."/>
            <person name="Schwartz J.R."/>
            <person name="Shinn P."/>
            <person name="Southwick A.M."/>
            <person name="Sun H."/>
            <person name="Tallon L.J."/>
            <person name="Tambunga G."/>
            <person name="Toriumi M.J."/>
            <person name="Town C.D."/>
            <person name="Utterback T."/>
            <person name="Van Aken S."/>
            <person name="Vaysberg M."/>
            <person name="Vysotskaia V.S."/>
            <person name="Walker M."/>
            <person name="Wu D."/>
            <person name="Yu G."/>
            <person name="Fraser C.M."/>
            <person name="Venter J.C."/>
            <person name="Davis R.W."/>
        </authorList>
    </citation>
    <scope>NUCLEOTIDE SEQUENCE [LARGE SCALE GENOMIC DNA]</scope>
    <source>
        <strain>cv. Columbia</strain>
    </source>
</reference>
<reference key="6">
    <citation type="journal article" date="2017" name="Plant J.">
        <title>Araport11: a complete reannotation of the Arabidopsis thaliana reference genome.</title>
        <authorList>
            <person name="Cheng C.Y."/>
            <person name="Krishnakumar V."/>
            <person name="Chan A.P."/>
            <person name="Thibaud-Nissen F."/>
            <person name="Schobel S."/>
            <person name="Town C.D."/>
        </authorList>
    </citation>
    <scope>GENOME REANNOTATION</scope>
    <source>
        <strain>cv. Columbia</strain>
    </source>
</reference>
<reference key="7">
    <citation type="journal article" date="2002" name="Science">
        <title>Functional annotation of a full-length Arabidopsis cDNA collection.</title>
        <authorList>
            <person name="Seki M."/>
            <person name="Narusaka M."/>
            <person name="Kamiya A."/>
            <person name="Ishida J."/>
            <person name="Satou M."/>
            <person name="Sakurai T."/>
            <person name="Nakajima M."/>
            <person name="Enju A."/>
            <person name="Akiyama K."/>
            <person name="Oono Y."/>
            <person name="Muramatsu M."/>
            <person name="Hayashizaki Y."/>
            <person name="Kawai J."/>
            <person name="Carninci P."/>
            <person name="Itoh M."/>
            <person name="Ishii Y."/>
            <person name="Arakawa T."/>
            <person name="Shibata K."/>
            <person name="Shinagawa A."/>
            <person name="Shinozaki K."/>
        </authorList>
    </citation>
    <scope>NUCLEOTIDE SEQUENCE [LARGE SCALE MRNA]</scope>
    <source>
        <strain>cv. Columbia</strain>
    </source>
</reference>
<reference key="8">
    <citation type="submission" date="2007-03" db="EMBL/GenBank/DDBJ databases">
        <title>Arabidopsis ORF clones.</title>
        <authorList>
            <person name="Bautista V.R."/>
            <person name="Kim C.J."/>
            <person name="Chen H."/>
            <person name="Wu S.Y."/>
            <person name="De Los Reyes C."/>
            <person name="Ecker J.R."/>
        </authorList>
    </citation>
    <scope>NUCLEOTIDE SEQUENCE [LARGE SCALE MRNA]</scope>
    <source>
        <strain>cv. Columbia</strain>
    </source>
</reference>
<reference key="9">
    <citation type="journal article" date="1999" name="Plant Cell Physiol.">
        <title>Plastidic RNA polymerase sigma factors in Arabidopsis.</title>
        <authorList>
            <person name="Kanamaru K."/>
            <person name="Fujiwara M."/>
            <person name="Seki M."/>
            <person name="Katagiri T."/>
            <person name="Nakamura M."/>
            <person name="Mochizuki N."/>
            <person name="Nagatani A."/>
            <person name="Shinozaki K."/>
            <person name="Tanaka K."/>
            <person name="Takahashi H."/>
        </authorList>
    </citation>
    <scope>SUBCELLULAR LOCATION</scope>
    <scope>TISSUE SPECIFICITY</scope>
    <scope>INDUCTION BY LIGHT</scope>
</reference>
<reference key="10">
    <citation type="journal article" date="2000" name="FEBS Lett.">
        <title>Chloroplast development in Arabidopsis thaliana requires the nuclear-encoded transcription factor sigma B.</title>
        <authorList>
            <person name="Shirano Y."/>
            <person name="Shimada H."/>
            <person name="Kanamaru K."/>
            <person name="Fujiwara M."/>
            <person name="Tanaka K."/>
            <person name="Takahashi H."/>
            <person name="Unno K."/>
            <person name="Sato S."/>
            <person name="Tabata S."/>
            <person name="Hayashi H."/>
            <person name="Miyake C."/>
            <person name="Yokota A."/>
            <person name="Shibata D."/>
        </authorList>
    </citation>
    <scope>FUNCTION</scope>
    <scope>DISRUPTION PHENOTYPE</scope>
    <source>
        <strain>cv. Wassilewskija</strain>
    </source>
</reference>
<reference key="11">
    <citation type="journal article" date="2001" name="Plant Cell Physiol.">
        <title>An Arabidopsis sigma factor (SIG2)-dependent expression of plastid-encoded tRNAs in chloroplasts.</title>
        <authorList>
            <person name="Kanamaru K."/>
            <person name="Nagashima A."/>
            <person name="Fujiwara M."/>
            <person name="Shimada H."/>
            <person name="Shirano Y."/>
            <person name="Nakabayashi K."/>
            <person name="Shibata D."/>
            <person name="Tanaka K."/>
            <person name="Takahashi H."/>
        </authorList>
    </citation>
    <scope>FUNCTION</scope>
    <scope>DISRUPTION PHENOTYPE</scope>
</reference>
<reference key="12">
    <citation type="journal article" date="2002" name="FEBS Lett.">
        <title>Blue light specific and differential expression of a plastid sigma factor, Sig5 in Arabidopsis thaliana.</title>
        <authorList>
            <person name="Tsunoyama Y."/>
            <person name="Morikawa K."/>
            <person name="Shiina T."/>
            <person name="Toyoshima Y."/>
        </authorList>
    </citation>
    <scope>INDUCTION BY LIGHT</scope>
    <source>
        <strain>cv. Columbia</strain>
    </source>
</reference>
<reference key="13">
    <citation type="journal article" date="2003" name="Nucleic Acids Res.">
        <title>Molecular genetic analysis of chloroplast gene promoters dependent on SIG2, a nucleus-encoded sigma factor for the plastid-encoded RNA polymerase, in Arabidopsis thaliana.</title>
        <authorList>
            <person name="Hanaoka M."/>
            <person name="Kanamaru K."/>
            <person name="Takahashi H."/>
            <person name="Tanaka K."/>
        </authorList>
    </citation>
    <scope>FUNCTION</scope>
    <scope>DISRUPTION PHENOTYPE</scope>
    <source>
        <strain>cv. Wassilewskija</strain>
    </source>
</reference>
<reference key="14">
    <citation type="journal article" date="2003" name="Plant Mol. Biol.">
        <title>Characterization of Arabidopsis plastid sigma-like transcription factors SIG1, SIG2 and SIG3.</title>
        <authorList>
            <person name="Privat I."/>
            <person name="Hakimi M.-A."/>
            <person name="Buhot L."/>
            <person name="Favory J.-J."/>
            <person name="Mache-Lerbs S."/>
        </authorList>
    </citation>
    <scope>FUNCTION</scope>
    <scope>TISSUE SPECIFICITY</scope>
    <scope>INDUCTION BY IMBIBITION AND LIGHT</scope>
    <scope>SUBCELLULAR LOCATION</scope>
    <source>
        <strain>cv. Columbia</strain>
    </source>
</reference>
<reference key="15">
    <citation type="journal article" date="2004" name="Proc. Natl. Acad. Sci. U.S.A.">
        <title>Blue light-induced transcription of plastid-encoded psbD gene is mediated by a nuclear-encoded transcription initiation factor, AtSig5.</title>
        <authorList>
            <person name="Tsunoyama Y."/>
            <person name="Ishizaki Y."/>
            <person name="Morikawa K."/>
            <person name="Kobori M."/>
            <person name="Nakahira Y."/>
            <person name="Takeba G."/>
            <person name="Toyoshima Y."/>
            <person name="Shiina T."/>
        </authorList>
    </citation>
    <scope>FUNCTION</scope>
    <scope>TISSUE SPECIFICITY</scope>
    <source>
        <strain>cv. Columbia</strain>
    </source>
</reference>
<reference key="16">
    <citation type="journal article" date="2005" name="Plant J.">
        <title>A nuclear-encoded sigma factor, Arabidopsis SIG6, recognizes sigma-70 type chloroplast promoters and regulates early chloroplast development in cotyledons.</title>
        <authorList>
            <person name="Ishizaki Y."/>
            <person name="Tsunoyama Y."/>
            <person name="Hatano K."/>
            <person name="Ando K."/>
            <person name="Kato K."/>
            <person name="Shinmyo A."/>
            <person name="Kobori M."/>
            <person name="Takeba G."/>
            <person name="Nakahira Y."/>
            <person name="Shiina T."/>
        </authorList>
    </citation>
    <scope>TISSUE SPECIFICITY</scope>
    <source>
        <strain>cv. Columbia</strain>
    </source>
</reference>
<reference key="17">
    <citation type="journal article" date="2008" name="Plant J.">
        <title>Light induction of Arabidopsis SIG1 and SIG5 transcripts in mature leaves: differential roles of cryptochrome 1 and cryptochrome 2 and dual function of SIG5 in the recognition of plastid promoters.</title>
        <authorList>
            <person name="Onda Y."/>
            <person name="Yagi Y."/>
            <person name="Saito Y."/>
            <person name="Takenaka N."/>
            <person name="Toyoshima Y."/>
        </authorList>
    </citation>
    <scope>INDUCTION BY LIGHT</scope>
</reference>
<keyword id="KW-0150">Chloroplast</keyword>
<keyword id="KW-0238">DNA-binding</keyword>
<keyword id="KW-0934">Plastid</keyword>
<keyword id="KW-1185">Reference proteome</keyword>
<keyword id="KW-0731">Sigma factor</keyword>
<keyword id="KW-0804">Transcription</keyword>
<keyword id="KW-0805">Transcription regulation</keyword>
<keyword id="KW-0809">Transit peptide</keyword>
<protein>
    <recommendedName>
        <fullName>RNA polymerase sigma factor sigB</fullName>
        <shortName>Sigma factor B</shortName>
        <shortName>Sigma-B</shortName>
    </recommendedName>
    <alternativeName>
        <fullName>Protein ABERRANT CHLOROPLAST 1</fullName>
    </alternativeName>
    <alternativeName>
        <fullName>RNA polymerase sigma factor sig1</fullName>
        <shortName>Atsig1</shortName>
        <shortName>Sigma factor 1</shortName>
    </alternativeName>
    <alternativeName>
        <fullName>RNA polymerase sigma factor sig2</fullName>
        <shortName>Atsig2</shortName>
        <shortName>Sigma factor 2</shortName>
    </alternativeName>
    <alternativeName>
        <fullName>RNA polymerase sigma factor sigA</fullName>
        <shortName>Sigma factor A</shortName>
        <shortName>Sigma-A</shortName>
    </alternativeName>
</protein>
<evidence type="ECO:0000250" key="1"/>
<evidence type="ECO:0000255" key="2"/>
<evidence type="ECO:0000256" key="3">
    <source>
        <dbReference type="SAM" id="MobiDB-lite"/>
    </source>
</evidence>
<evidence type="ECO:0000269" key="4">
    <source>
    </source>
</evidence>
<evidence type="ECO:0000269" key="5">
    <source>
    </source>
</evidence>
<evidence type="ECO:0000269" key="6">
    <source>
    </source>
</evidence>
<evidence type="ECO:0000269" key="7">
    <source>
    </source>
</evidence>
<evidence type="ECO:0000269" key="8">
    <source>
    </source>
</evidence>
<evidence type="ECO:0000269" key="9">
    <source>
    </source>
</evidence>
<evidence type="ECO:0000269" key="10">
    <source>
    </source>
</evidence>
<evidence type="ECO:0000269" key="11">
    <source>
    </source>
</evidence>
<evidence type="ECO:0000269" key="12">
    <source>
    </source>
</evidence>
<evidence type="ECO:0000269" key="13">
    <source>
    </source>
</evidence>
<evidence type="ECO:0000269" key="14">
    <source>
    </source>
</evidence>
<evidence type="ECO:0000269" key="15">
    <source>
    </source>
</evidence>
<evidence type="ECO:0000269" key="16">
    <source>
    </source>
</evidence>
<evidence type="ECO:0000305" key="17"/>